<accession>P39225</accession>
<protein>
    <recommendedName>
        <fullName>Uncharacterized 13.1 kDa protein in e-segB intergenic region</fullName>
    </recommendedName>
</protein>
<sequence length="111" mass="13070">MKRNFSKAFCNRNNYPEELFESKDFKEFNERSQNMPVQWVLDYAKRIFEGVRDICPDDEAPYFKKAWELVNQAYINALESSKGTDDDFILLAINDAIIEAINAFIDELDEE</sequence>
<organismHost>
    <name type="scientific">Escherichia coli</name>
    <dbReference type="NCBI Taxonomy" id="562"/>
</organismHost>
<organism>
    <name type="scientific">Enterobacteria phage T4</name>
    <name type="common">Bacteriophage T4</name>
    <dbReference type="NCBI Taxonomy" id="10665"/>
    <lineage>
        <taxon>Viruses</taxon>
        <taxon>Duplodnaviria</taxon>
        <taxon>Heunggongvirae</taxon>
        <taxon>Uroviricota</taxon>
        <taxon>Caudoviricetes</taxon>
        <taxon>Straboviridae</taxon>
        <taxon>Tevenvirinae</taxon>
        <taxon>Tequatrovirus</taxon>
    </lineage>
</organism>
<keyword id="KW-1185">Reference proteome</keyword>
<feature type="chain" id="PRO_0000165149" description="Uncharacterized 13.1 kDa protein in e-segB intergenic region">
    <location>
        <begin position="1"/>
        <end position="111"/>
    </location>
</feature>
<gene>
    <name type="primary">y06R</name>
    <name type="synonym">e.7</name>
    <name type="synonym">msp2</name>
</gene>
<name>Y06R_BPT4</name>
<reference key="1">
    <citation type="submission" date="1994-08" db="EMBL/GenBank/DDBJ databases">
        <title>Analysis of the region between lysozyme and the tRNA genes of bacteriophage T4.</title>
        <authorList>
            <person name="Anderson B."/>
            <person name="Zurabishvili T."/>
            <person name="Marusich E."/>
            <person name="Schneider M."/>
            <person name="Mullins T."/>
            <person name="Napuli A."/>
            <person name="Mesyanzhinov V.V."/>
            <person name="Neitzel J."/>
            <person name="Kutter E."/>
        </authorList>
    </citation>
    <scope>NUCLEOTIDE SEQUENCE [GENOMIC DNA]</scope>
    <source>
        <strain>D</strain>
    </source>
</reference>
<reference key="2">
    <citation type="journal article" date="2003" name="Microbiol. Mol. Biol. Rev.">
        <title>Bacteriophage T4 genome.</title>
        <authorList>
            <person name="Miller E.S."/>
            <person name="Kutter E."/>
            <person name="Mosig G."/>
            <person name="Arisaka F."/>
            <person name="Kunisawa T."/>
            <person name="Ruger W."/>
        </authorList>
    </citation>
    <scope>NUCLEOTIDE SEQUENCE [LARGE SCALE GENOMIC DNA]</scope>
</reference>
<dbReference type="EMBL" id="L13089">
    <property type="protein sequence ID" value="AAB59287.1"/>
    <property type="molecule type" value="Genomic_DNA"/>
</dbReference>
<dbReference type="EMBL" id="AF158101">
    <property type="protein sequence ID" value="AAD42575.1"/>
    <property type="molecule type" value="Genomic_DNA"/>
</dbReference>
<dbReference type="RefSeq" id="NP_049743.1">
    <property type="nucleotide sequence ID" value="NC_000866.4"/>
</dbReference>
<dbReference type="SMR" id="P39225"/>
<dbReference type="GeneID" id="1258604"/>
<dbReference type="KEGG" id="vg:1258604"/>
<dbReference type="OrthoDB" id="34915at10239"/>
<dbReference type="Proteomes" id="UP000009087">
    <property type="component" value="Segment"/>
</dbReference>
<proteinExistence type="predicted"/>